<feature type="chain" id="PRO_0000095952" description="Translation initiation factor IF-1, chloroplastic">
    <location>
        <begin position="1"/>
        <end position="84"/>
    </location>
</feature>
<feature type="domain" description="S1-like" evidence="1">
    <location>
        <begin position="1"/>
        <end position="72"/>
    </location>
</feature>
<accession>O98459</accession>
<evidence type="ECO:0000255" key="1">
    <source>
        <dbReference type="HAMAP-Rule" id="MF_00075"/>
    </source>
</evidence>
<geneLocation type="chloroplast"/>
<protein>
    <recommendedName>
        <fullName evidence="1">Translation initiation factor IF-1, chloroplastic</fullName>
    </recommendedName>
</protein>
<organism>
    <name type="scientific">Spirogyra maxima</name>
    <name type="common">Green alga</name>
    <dbReference type="NCBI Taxonomy" id="3180"/>
    <lineage>
        <taxon>Eukaryota</taxon>
        <taxon>Viridiplantae</taxon>
        <taxon>Streptophyta</taxon>
        <taxon>Zygnematophyceae</taxon>
        <taxon>Zygnematophycidae</taxon>
        <taxon>Zygnematales</taxon>
        <taxon>Zygnemataceae</taxon>
        <taxon>Spirogyra</taxon>
    </lineage>
</organism>
<sequence length="84" mass="9699">MKKQNLVEMEGTITESLPNAMFRVCLDNGCYVLAHISGKIRRNYIRILIGDRVKVELSPYDLSKGRITYRLRIKSINDSNDLIK</sequence>
<comment type="function">
    <text evidence="1">One of the essential components for the initiation of protein synthesis. Stabilizes the binding of IF-2 and IF-3 on the 30S subunit to which N-formylmethionyl-tRNA(fMet) subsequently binds. Helps modulate mRNA selection, yielding the 30S pre-initiation complex (PIC). Upon addition of the 50S ribosomal subunit IF-1, IF-2 and IF-3 are released leaving the mature 70S translation initiation complex.</text>
</comment>
<comment type="subunit">
    <text evidence="1">Component of the 30S ribosomal translation pre-initiation complex which assembles on the 30S ribosome in the order IF-2 and IF-3, IF-1 and N-formylmethionyl-tRNA(fMet); mRNA recruitment can occur at any time during PIC assembly.</text>
</comment>
<comment type="subcellular location">
    <subcellularLocation>
        <location evidence="1">Plastid</location>
        <location evidence="1">Chloroplast</location>
    </subcellularLocation>
</comment>
<comment type="similarity">
    <text evidence="1">Belongs to the IF-1 family.</text>
</comment>
<gene>
    <name evidence="1" type="primary">infA</name>
</gene>
<name>IF1C_SPIMX</name>
<proteinExistence type="inferred from homology"/>
<dbReference type="EMBL" id="AF050665">
    <property type="protein sequence ID" value="AAC95315.1"/>
    <property type="molecule type" value="Genomic_DNA"/>
</dbReference>
<dbReference type="RefSeq" id="YP_009258381.1">
    <property type="nucleotide sequence ID" value="NC_030355.1"/>
</dbReference>
<dbReference type="SMR" id="O98459"/>
<dbReference type="GeneID" id="27984740"/>
<dbReference type="GO" id="GO:0009507">
    <property type="term" value="C:chloroplast"/>
    <property type="evidence" value="ECO:0007669"/>
    <property type="project" value="UniProtKB-SubCell"/>
</dbReference>
<dbReference type="GO" id="GO:0005829">
    <property type="term" value="C:cytosol"/>
    <property type="evidence" value="ECO:0007669"/>
    <property type="project" value="TreeGrafter"/>
</dbReference>
<dbReference type="GO" id="GO:0043022">
    <property type="term" value="F:ribosome binding"/>
    <property type="evidence" value="ECO:0007669"/>
    <property type="project" value="UniProtKB-UniRule"/>
</dbReference>
<dbReference type="GO" id="GO:0019843">
    <property type="term" value="F:rRNA binding"/>
    <property type="evidence" value="ECO:0007669"/>
    <property type="project" value="UniProtKB-UniRule"/>
</dbReference>
<dbReference type="GO" id="GO:0003743">
    <property type="term" value="F:translation initiation factor activity"/>
    <property type="evidence" value="ECO:0007669"/>
    <property type="project" value="UniProtKB-UniRule"/>
</dbReference>
<dbReference type="CDD" id="cd04451">
    <property type="entry name" value="S1_IF1"/>
    <property type="match status" value="1"/>
</dbReference>
<dbReference type="FunFam" id="2.40.50.140:FF:000002">
    <property type="entry name" value="Translation initiation factor IF-1"/>
    <property type="match status" value="1"/>
</dbReference>
<dbReference type="Gene3D" id="2.40.50.140">
    <property type="entry name" value="Nucleic acid-binding proteins"/>
    <property type="match status" value="1"/>
</dbReference>
<dbReference type="HAMAP" id="MF_00075">
    <property type="entry name" value="IF_1"/>
    <property type="match status" value="1"/>
</dbReference>
<dbReference type="InterPro" id="IPR012340">
    <property type="entry name" value="NA-bd_OB-fold"/>
</dbReference>
<dbReference type="InterPro" id="IPR006196">
    <property type="entry name" value="RNA-binding_domain_S1_IF1"/>
</dbReference>
<dbReference type="InterPro" id="IPR003029">
    <property type="entry name" value="S1_domain"/>
</dbReference>
<dbReference type="InterPro" id="IPR004368">
    <property type="entry name" value="TIF_IF1"/>
</dbReference>
<dbReference type="NCBIfam" id="TIGR00008">
    <property type="entry name" value="infA"/>
    <property type="match status" value="1"/>
</dbReference>
<dbReference type="PANTHER" id="PTHR33370">
    <property type="entry name" value="TRANSLATION INITIATION FACTOR IF-1, CHLOROPLASTIC"/>
    <property type="match status" value="1"/>
</dbReference>
<dbReference type="PANTHER" id="PTHR33370:SF1">
    <property type="entry name" value="TRANSLATION INITIATION FACTOR IF-1, CHLOROPLASTIC"/>
    <property type="match status" value="1"/>
</dbReference>
<dbReference type="Pfam" id="PF01176">
    <property type="entry name" value="eIF-1a"/>
    <property type="match status" value="1"/>
</dbReference>
<dbReference type="SMART" id="SM00316">
    <property type="entry name" value="S1"/>
    <property type="match status" value="1"/>
</dbReference>
<dbReference type="SUPFAM" id="SSF50249">
    <property type="entry name" value="Nucleic acid-binding proteins"/>
    <property type="match status" value="1"/>
</dbReference>
<dbReference type="PROSITE" id="PS50832">
    <property type="entry name" value="S1_IF1_TYPE"/>
    <property type="match status" value="1"/>
</dbReference>
<keyword id="KW-0150">Chloroplast</keyword>
<keyword id="KW-0396">Initiation factor</keyword>
<keyword id="KW-0934">Plastid</keyword>
<keyword id="KW-0648">Protein biosynthesis</keyword>
<keyword id="KW-0694">RNA-binding</keyword>
<keyword id="KW-0699">rRNA-binding</keyword>
<reference key="1">
    <citation type="submission" date="1998-02" db="EMBL/GenBank/DDBJ databases">
        <title>Chloroplast rpl23 gene cluster of Spirogyra maxima (Charophyceae), shared by land plants.</title>
        <authorList>
            <person name="Lee J."/>
            <person name="Manhart J.R."/>
        </authorList>
    </citation>
    <scope>NUCLEOTIDE SEQUENCE [GENOMIC DNA]</scope>
    <source>
        <strain>UTEX LB 2495</strain>
    </source>
</reference>